<comment type="similarity">
    <text evidence="1">Belongs to the bacterial ribosomal protein bL33 family.</text>
</comment>
<name>RL331_NOCFA</name>
<dbReference type="EMBL" id="AP006618">
    <property type="protein sequence ID" value="BAD59828.1"/>
    <property type="molecule type" value="Genomic_DNA"/>
</dbReference>
<dbReference type="SMR" id="Q5YPR3"/>
<dbReference type="STRING" id="247156.NFA_49760"/>
<dbReference type="GeneID" id="61135561"/>
<dbReference type="KEGG" id="nfa:NFA_49760"/>
<dbReference type="eggNOG" id="COG0267">
    <property type="taxonomic scope" value="Bacteria"/>
</dbReference>
<dbReference type="HOGENOM" id="CLU_190949_1_1_11"/>
<dbReference type="OrthoDB" id="21586at2"/>
<dbReference type="Proteomes" id="UP000006820">
    <property type="component" value="Chromosome"/>
</dbReference>
<dbReference type="GO" id="GO:0022625">
    <property type="term" value="C:cytosolic large ribosomal subunit"/>
    <property type="evidence" value="ECO:0007669"/>
    <property type="project" value="TreeGrafter"/>
</dbReference>
<dbReference type="GO" id="GO:0003735">
    <property type="term" value="F:structural constituent of ribosome"/>
    <property type="evidence" value="ECO:0007669"/>
    <property type="project" value="InterPro"/>
</dbReference>
<dbReference type="GO" id="GO:0006412">
    <property type="term" value="P:translation"/>
    <property type="evidence" value="ECO:0007669"/>
    <property type="project" value="UniProtKB-UniRule"/>
</dbReference>
<dbReference type="FunFam" id="2.20.28.120:FF:000002">
    <property type="entry name" value="50S ribosomal protein L33"/>
    <property type="match status" value="1"/>
</dbReference>
<dbReference type="Gene3D" id="2.20.28.120">
    <property type="entry name" value="Ribosomal protein L33"/>
    <property type="match status" value="1"/>
</dbReference>
<dbReference type="HAMAP" id="MF_00294">
    <property type="entry name" value="Ribosomal_bL33"/>
    <property type="match status" value="1"/>
</dbReference>
<dbReference type="InterPro" id="IPR001705">
    <property type="entry name" value="Ribosomal_bL33"/>
</dbReference>
<dbReference type="InterPro" id="IPR018264">
    <property type="entry name" value="Ribosomal_bL33_CS"/>
</dbReference>
<dbReference type="InterPro" id="IPR038584">
    <property type="entry name" value="Ribosomal_bL33_sf"/>
</dbReference>
<dbReference type="InterPro" id="IPR011332">
    <property type="entry name" value="Ribosomal_zn-bd"/>
</dbReference>
<dbReference type="NCBIfam" id="NF001860">
    <property type="entry name" value="PRK00595.1"/>
    <property type="match status" value="1"/>
</dbReference>
<dbReference type="NCBIfam" id="TIGR01023">
    <property type="entry name" value="rpmG_bact"/>
    <property type="match status" value="1"/>
</dbReference>
<dbReference type="PANTHER" id="PTHR15238">
    <property type="entry name" value="54S RIBOSOMAL PROTEIN L39, MITOCHONDRIAL"/>
    <property type="match status" value="1"/>
</dbReference>
<dbReference type="PANTHER" id="PTHR15238:SF1">
    <property type="entry name" value="LARGE RIBOSOMAL SUBUNIT PROTEIN BL33M"/>
    <property type="match status" value="1"/>
</dbReference>
<dbReference type="Pfam" id="PF00471">
    <property type="entry name" value="Ribosomal_L33"/>
    <property type="match status" value="1"/>
</dbReference>
<dbReference type="SUPFAM" id="SSF57829">
    <property type="entry name" value="Zn-binding ribosomal proteins"/>
    <property type="match status" value="1"/>
</dbReference>
<dbReference type="PROSITE" id="PS00582">
    <property type="entry name" value="RIBOSOMAL_L33"/>
    <property type="match status" value="1"/>
</dbReference>
<evidence type="ECO:0000255" key="1">
    <source>
        <dbReference type="HAMAP-Rule" id="MF_00294"/>
    </source>
</evidence>
<protein>
    <recommendedName>
        <fullName evidence="1">Large ribosomal subunit protein bL33A</fullName>
    </recommendedName>
    <alternativeName>
        <fullName evidence="1">50S ribosomal protein L33 1</fullName>
    </alternativeName>
</protein>
<sequence length="56" mass="6667">MASKSTELRPIVKLKSTAGTGYTYVTRKNRRNDPDRMVLRKYDPVVRKHVDFREER</sequence>
<feature type="chain" id="PRO_0000356593" description="Large ribosomal subunit protein bL33A">
    <location>
        <begin position="1"/>
        <end position="56"/>
    </location>
</feature>
<gene>
    <name evidence="1" type="primary">rpmG1</name>
    <name type="ordered locus">NFA_49760</name>
</gene>
<accession>Q5YPR3</accession>
<organism>
    <name type="scientific">Nocardia farcinica (strain IFM 10152)</name>
    <dbReference type="NCBI Taxonomy" id="247156"/>
    <lineage>
        <taxon>Bacteria</taxon>
        <taxon>Bacillati</taxon>
        <taxon>Actinomycetota</taxon>
        <taxon>Actinomycetes</taxon>
        <taxon>Mycobacteriales</taxon>
        <taxon>Nocardiaceae</taxon>
        <taxon>Nocardia</taxon>
    </lineage>
</organism>
<proteinExistence type="inferred from homology"/>
<keyword id="KW-1185">Reference proteome</keyword>
<keyword id="KW-0687">Ribonucleoprotein</keyword>
<keyword id="KW-0689">Ribosomal protein</keyword>
<reference key="1">
    <citation type="journal article" date="2004" name="Proc. Natl. Acad. Sci. U.S.A.">
        <title>The complete genomic sequence of Nocardia farcinica IFM 10152.</title>
        <authorList>
            <person name="Ishikawa J."/>
            <person name="Yamashita A."/>
            <person name="Mikami Y."/>
            <person name="Hoshino Y."/>
            <person name="Kurita H."/>
            <person name="Hotta K."/>
            <person name="Shiba T."/>
            <person name="Hattori M."/>
        </authorList>
    </citation>
    <scope>NUCLEOTIDE SEQUENCE [LARGE SCALE GENOMIC DNA]</scope>
    <source>
        <strain>IFM 10152</strain>
    </source>
</reference>